<proteinExistence type="inferred from homology"/>
<organism>
    <name type="scientific">Mycolicibacterium smegmatis (strain MKD8)</name>
    <name type="common">Mycobacterium smegmatis</name>
    <dbReference type="NCBI Taxonomy" id="1214915"/>
    <lineage>
        <taxon>Bacteria</taxon>
        <taxon>Bacillati</taxon>
        <taxon>Actinomycetota</taxon>
        <taxon>Actinomycetes</taxon>
        <taxon>Mycobacteriales</taxon>
        <taxon>Mycobacteriaceae</taxon>
        <taxon>Mycolicibacterium</taxon>
    </lineage>
</organism>
<dbReference type="EMBL" id="CP027541">
    <property type="protein sequence ID" value="AWT51051.1"/>
    <property type="molecule type" value="Genomic_DNA"/>
</dbReference>
<dbReference type="RefSeq" id="WP_003891387.1">
    <property type="nucleotide sequence ID" value="NZ_CP027541.1"/>
</dbReference>
<dbReference type="SMR" id="L8FM50"/>
<dbReference type="PATRIC" id="fig|1214915.3.peg.60"/>
<dbReference type="HOGENOM" id="CLU_036302_3_0_11"/>
<dbReference type="Proteomes" id="UP000011200">
    <property type="component" value="Chromosome"/>
</dbReference>
<dbReference type="GO" id="GO:0005576">
    <property type="term" value="C:extracellular region"/>
    <property type="evidence" value="ECO:0007669"/>
    <property type="project" value="TreeGrafter"/>
</dbReference>
<dbReference type="GO" id="GO:0005886">
    <property type="term" value="C:plasma membrane"/>
    <property type="evidence" value="ECO:0007669"/>
    <property type="project" value="UniProtKB-SubCell"/>
</dbReference>
<dbReference type="GO" id="GO:0005524">
    <property type="term" value="F:ATP binding"/>
    <property type="evidence" value="ECO:0007669"/>
    <property type="project" value="UniProtKB-KW"/>
</dbReference>
<dbReference type="GO" id="GO:0016787">
    <property type="term" value="F:hydrolase activity"/>
    <property type="evidence" value="ECO:0007669"/>
    <property type="project" value="UniProtKB-KW"/>
</dbReference>
<dbReference type="Gene3D" id="3.30.2390.20">
    <property type="entry name" value="Type VII secretion system EccB, repeat 1 domain"/>
    <property type="match status" value="1"/>
</dbReference>
<dbReference type="Gene3D" id="2.40.50.910">
    <property type="entry name" value="Type VII secretion system EccB, repeat 3 domain"/>
    <property type="match status" value="1"/>
</dbReference>
<dbReference type="InterPro" id="IPR007795">
    <property type="entry name" value="T7SS_EccB"/>
</dbReference>
<dbReference type="InterPro" id="IPR044857">
    <property type="entry name" value="T7SS_EccB_R1"/>
</dbReference>
<dbReference type="InterPro" id="IPR042485">
    <property type="entry name" value="T7SS_EccB_R3"/>
</dbReference>
<dbReference type="NCBIfam" id="TIGR03919">
    <property type="entry name" value="T7SS_EccB"/>
    <property type="match status" value="1"/>
</dbReference>
<dbReference type="PANTHER" id="PTHR40765">
    <property type="entry name" value="ESX-2 SECRETION SYSTEM ATPASE ECCB2"/>
    <property type="match status" value="1"/>
</dbReference>
<dbReference type="PANTHER" id="PTHR40765:SF2">
    <property type="entry name" value="ESX-2 SECRETION SYSTEM ATPASE ECCB2"/>
    <property type="match status" value="1"/>
</dbReference>
<dbReference type="Pfam" id="PF05108">
    <property type="entry name" value="T7SS_ESX1_EccB"/>
    <property type="match status" value="1"/>
</dbReference>
<comment type="function">
    <text evidence="1 4 6">An ATPase (By similarity). Part of the ESX-1 / type VII specialized secretion system (T7SS), which exports several proteins including EsxA and EsxB (Probable). Plays a role in DNA conjugation, in both donor and recipient strains (PubMed:18554329).</text>
</comment>
<comment type="subunit">
    <text evidence="2">Part of the ESX-1 / type VII secretion system (T7SS), which is composed of cytosolic and membrane components. The ESX-1 membrane complex is composed of EccB1, EccCa1, EccCb1, EccD1 and EccE1 (By similarity).</text>
</comment>
<comment type="subcellular location">
    <subcellularLocation>
        <location evidence="3">Cell inner membrane</location>
        <topology evidence="3">Single-pass membrane protein</topology>
    </subcellularLocation>
</comment>
<comment type="disruption phenotype">
    <text evidence="4">Loss of DNA conjugation when disrupted in recipient strain, strain does not secrete EsxB (PubMed:18554329).</text>
</comment>
<comment type="miscellaneous">
    <text evidence="7">DNA conjugation in M.smegmatis is unidirectional with distinct donor and recipient strains; mc(2)155 is a donor strain while MKD8 is a recipient strain. Mutations in a donor strain that alter DNA transfer do not always alter DNA transfer in a recipient strain.</text>
</comment>
<comment type="similarity">
    <text evidence="6">Belongs to the EccB family.</text>
</comment>
<name>ECCB1_MYCSE</name>
<evidence type="ECO:0000250" key="1">
    <source>
        <dbReference type="UniProtKB" id="A0QNJ0"/>
    </source>
</evidence>
<evidence type="ECO:0000250" key="2">
    <source>
        <dbReference type="UniProtKB" id="P9WNR7"/>
    </source>
</evidence>
<evidence type="ECO:0000255" key="3"/>
<evidence type="ECO:0000269" key="4">
    <source>
    </source>
</evidence>
<evidence type="ECO:0000303" key="5">
    <source>
    </source>
</evidence>
<evidence type="ECO:0000305" key="6"/>
<evidence type="ECO:0000305" key="7">
    <source>
    </source>
</evidence>
<evidence type="ECO:0000312" key="8">
    <source>
        <dbReference type="EMBL" id="AWT51051.1"/>
    </source>
</evidence>
<accession>L8FM50</accession>
<accession>A0A2U9PH42</accession>
<protein>
    <recommendedName>
        <fullName>ESX-1 secretion system ATPase EccB1</fullName>
    </recommendedName>
</protein>
<sequence length="479" mass="50995">MAGFRLTTKVQVSGWRFLLRRVEHAIVRRDTRMFDDPLQFYSRAVFAGVVVSVLICLGAALMAYFKPLGKQGSDQLLVDRTTNQLYVMLPGSNQLRPVYNLTSARLVLGNASNPVAVKSEELNRISKGQSIGIPGAPYATPTGTPASQWTLCDTVAKPDSSAPKVETSILIRTLAIDSGVGPIRADQGMLVSYEGANWLITEGGRHSIDLADRAVTSAVGIPVTAKPTPISQGLFNALPNRGPWQLPQIPAAGAPNSVGLPENLVIGSVFRTATESDPQHYVVLPDGVARVNNTTAAALRATNSYGLMQPPAVEASVVAKIPEQVYVSPLPDQPLDVLLRQDSPVLCWSWQREPGDQAPKTTVIAGRRLPLPASAIGTGIDQIGGDSTVYIEGGQFVRLQSPDPRVGESMYYIDPQGVRYGIANDDAAKNLGLAGPVNAPWQVVGLLVDGPVLSKEAALIEHDTLPADPNPRKVASGEG</sequence>
<reference key="1">
    <citation type="journal article" date="2013" name="Genome Announc.">
        <title>Draft genome sequence of MKD8, a conjugal recipient Mycobacterium smegmatis strain.</title>
        <authorList>
            <person name="Gray T.A."/>
            <person name="Palumbo M.J."/>
            <person name="Derbyshire K.M."/>
        </authorList>
    </citation>
    <scope>NUCLEOTIDE SEQUENCE [LARGE SCALE GENOMIC DNA]</scope>
    <source>
        <strain>MKD8</strain>
    </source>
</reference>
<reference key="2">
    <citation type="submission" date="2018-03" db="EMBL/GenBank/DDBJ databases">
        <authorList>
            <person name="Derbyshire K."/>
            <person name="Gray T.A."/>
            <person name="Champion M."/>
        </authorList>
    </citation>
    <scope>NUCLEOTIDE SEQUENCE [LARGE SCALE GENOMIC DNA]</scope>
    <source>
        <strain>MKD8</strain>
    </source>
</reference>
<reference key="3">
    <citation type="journal article" date="2008" name="Mol. Microbiol.">
        <title>The specialized secretory apparatus ESX-1 is essential for DNA transfer in Mycobacterium smegmatis.</title>
        <authorList>
            <person name="Coros A."/>
            <person name="Callahan B."/>
            <person name="Battaglioli E."/>
            <person name="Derbyshire K.M."/>
        </authorList>
    </citation>
    <scope>FUNCTION</scope>
    <scope>DISRUPTION PHENOTYPE</scope>
    <source>
        <strain>MKD8</strain>
    </source>
</reference>
<feature type="chain" id="PRO_0000438313" description="ESX-1 secretion system ATPase EccB1">
    <location>
        <begin position="1"/>
        <end position="479"/>
    </location>
</feature>
<feature type="topological domain" description="Cytoplasmic" evidence="6">
    <location>
        <begin position="1"/>
        <end position="44"/>
    </location>
</feature>
<feature type="transmembrane region" description="Helical" evidence="3">
    <location>
        <begin position="45"/>
        <end position="65"/>
    </location>
</feature>
<feature type="topological domain" description="Periplasmic" evidence="6">
    <location>
        <begin position="66"/>
        <end position="479"/>
    </location>
</feature>
<feature type="disulfide bond" evidence="1">
    <location>
        <begin position="152"/>
        <end position="347"/>
    </location>
</feature>
<gene>
    <name evidence="5" type="ORF">0060</name>
    <name evidence="8" type="ORF">D806_000570</name>
    <name type="ORF">D806_0060</name>
</gene>
<keyword id="KW-0067">ATP-binding</keyword>
<keyword id="KW-0997">Cell inner membrane</keyword>
<keyword id="KW-1003">Cell membrane</keyword>
<keyword id="KW-1015">Disulfide bond</keyword>
<keyword id="KW-0378">Hydrolase</keyword>
<keyword id="KW-0472">Membrane</keyword>
<keyword id="KW-0547">Nucleotide-binding</keyword>
<keyword id="KW-0812">Transmembrane</keyword>
<keyword id="KW-1133">Transmembrane helix</keyword>
<keyword id="KW-0813">Transport</keyword>